<accession>Q03011</accession>
<accession>B4EUJ9</accession>
<proteinExistence type="evidence at protein level"/>
<evidence type="ECO:0000269" key="1">
    <source>
    </source>
</evidence>
<evidence type="ECO:0000305" key="2"/>
<reference key="1">
    <citation type="journal article" date="1993" name="J. Bacteriol.">
        <title>Proteus mirabilis MR/P fimbriae: molecular cloning, expression, and nucleotide sequence of the major fimbrial subunit gene.</title>
        <authorList>
            <person name="Bahrani F.K."/>
            <person name="Mobley H.L.T."/>
        </authorList>
    </citation>
    <scope>NUCLEOTIDE SEQUENCE [GENOMIC DNA]</scope>
    <scope>PROTEIN SEQUENCE OF 24-43</scope>
</reference>
<reference key="2">
    <citation type="journal article" date="1994" name="J. Bacteriol.">
        <title>Proteus mirabilis MR/P fimbrial operon: genetic organization, nucleotide sequence, and conditions for expression.</title>
        <authorList>
            <person name="Bahrani F.K."/>
            <person name="Mobley H.L.T."/>
        </authorList>
    </citation>
    <scope>NUCLEOTIDE SEQUENCE [GENOMIC DNA]</scope>
</reference>
<reference key="3">
    <citation type="journal article" date="2008" name="J. Bacteriol.">
        <title>Complete genome sequence of uropathogenic Proteus mirabilis, a master of both adherence and motility.</title>
        <authorList>
            <person name="Pearson M.M."/>
            <person name="Sebaihia M."/>
            <person name="Churcher C."/>
            <person name="Quail M.A."/>
            <person name="Seshasayee A.S."/>
            <person name="Luscombe N.M."/>
            <person name="Abdellah Z."/>
            <person name="Arrosmith C."/>
            <person name="Atkin B."/>
            <person name="Chillingworth T."/>
            <person name="Hauser H."/>
            <person name="Jagels K."/>
            <person name="Moule S."/>
            <person name="Mungall K."/>
            <person name="Norbertczak H."/>
            <person name="Rabbinowitsch E."/>
            <person name="Walker D."/>
            <person name="Whithead S."/>
            <person name="Thomson N.R."/>
            <person name="Rather P.N."/>
            <person name="Parkhill J."/>
            <person name="Mobley H.L.T."/>
        </authorList>
    </citation>
    <scope>NUCLEOTIDE SEQUENCE [LARGE SCALE GENOMIC DNA]</scope>
    <source>
        <strain>HI4320</strain>
    </source>
</reference>
<feature type="signal peptide" evidence="1">
    <location>
        <begin position="1"/>
        <end position="23"/>
    </location>
</feature>
<feature type="chain" id="PRO_0000009231" description="Major MR/P fimbria protein">
    <location>
        <begin position="24"/>
        <end position="175"/>
    </location>
</feature>
<feature type="disulfide bond" evidence="2">
    <location>
        <begin position="42"/>
        <end position="81"/>
    </location>
</feature>
<organism>
    <name type="scientific">Proteus mirabilis (strain HI4320)</name>
    <dbReference type="NCBI Taxonomy" id="529507"/>
    <lineage>
        <taxon>Bacteria</taxon>
        <taxon>Pseudomonadati</taxon>
        <taxon>Pseudomonadota</taxon>
        <taxon>Gammaproteobacteria</taxon>
        <taxon>Enterobacterales</taxon>
        <taxon>Morganellaceae</taxon>
        <taxon>Proteus</taxon>
    </lineage>
</organism>
<keyword id="KW-0903">Direct protein sequencing</keyword>
<keyword id="KW-1015">Disulfide bond</keyword>
<keyword id="KW-0281">Fimbrium</keyword>
<keyword id="KW-1185">Reference proteome</keyword>
<keyword id="KW-0732">Signal</keyword>
<gene>
    <name type="primary">mrpA</name>
    <name type="ordered locus">PMI0263</name>
</gene>
<dbReference type="EMBL" id="Z18753">
    <property type="protein sequence ID" value="CAA79244.1"/>
    <property type="molecule type" value="Genomic_DNA"/>
</dbReference>
<dbReference type="EMBL" id="Z32686">
    <property type="protein sequence ID" value="CAA83633.1"/>
    <property type="molecule type" value="Genomic_DNA"/>
</dbReference>
<dbReference type="EMBL" id="AM942759">
    <property type="protein sequence ID" value="CAR40720.1"/>
    <property type="molecule type" value="Genomic_DNA"/>
</dbReference>
<dbReference type="PIR" id="A40643">
    <property type="entry name" value="A40643"/>
</dbReference>
<dbReference type="RefSeq" id="WP_004247325.1">
    <property type="nucleotide sequence ID" value="NC_010554.1"/>
</dbReference>
<dbReference type="SMR" id="Q03011"/>
<dbReference type="DNASU" id="6803219"/>
<dbReference type="EnsemblBacteria" id="CAR40720">
    <property type="protein sequence ID" value="CAR40720"/>
    <property type="gene ID" value="PMI0263"/>
</dbReference>
<dbReference type="GeneID" id="6803219"/>
<dbReference type="KEGG" id="pmr:PMI0263"/>
<dbReference type="eggNOG" id="COG3539">
    <property type="taxonomic scope" value="Bacteria"/>
</dbReference>
<dbReference type="HOGENOM" id="CLU_088965_3_1_6"/>
<dbReference type="Proteomes" id="UP000008319">
    <property type="component" value="Chromosome"/>
</dbReference>
<dbReference type="GO" id="GO:0009289">
    <property type="term" value="C:pilus"/>
    <property type="evidence" value="ECO:0007669"/>
    <property type="project" value="UniProtKB-SubCell"/>
</dbReference>
<dbReference type="GO" id="GO:0043709">
    <property type="term" value="P:cell adhesion involved in single-species biofilm formation"/>
    <property type="evidence" value="ECO:0007669"/>
    <property type="project" value="TreeGrafter"/>
</dbReference>
<dbReference type="Gene3D" id="2.60.40.1090">
    <property type="entry name" value="Fimbrial-type adhesion domain"/>
    <property type="match status" value="1"/>
</dbReference>
<dbReference type="InterPro" id="IPR000259">
    <property type="entry name" value="Adhesion_dom_fimbrial"/>
</dbReference>
<dbReference type="InterPro" id="IPR036937">
    <property type="entry name" value="Adhesion_dom_fimbrial_sf"/>
</dbReference>
<dbReference type="InterPro" id="IPR008966">
    <property type="entry name" value="Adhesion_dom_sf"/>
</dbReference>
<dbReference type="InterPro" id="IPR050263">
    <property type="entry name" value="Bact_Fimbrial_Adh_Pro"/>
</dbReference>
<dbReference type="PANTHER" id="PTHR33420:SF26">
    <property type="entry name" value="FIMBRIAL SUBUNIT"/>
    <property type="match status" value="1"/>
</dbReference>
<dbReference type="PANTHER" id="PTHR33420">
    <property type="entry name" value="FIMBRIAL SUBUNIT ELFA-RELATED"/>
    <property type="match status" value="1"/>
</dbReference>
<dbReference type="Pfam" id="PF00419">
    <property type="entry name" value="Fimbrial"/>
    <property type="match status" value="1"/>
</dbReference>
<dbReference type="SUPFAM" id="SSF49401">
    <property type="entry name" value="Bacterial adhesins"/>
    <property type="match status" value="1"/>
</dbReference>
<protein>
    <recommendedName>
        <fullName>Major MR/P fimbria protein</fullName>
    </recommendedName>
</protein>
<name>MRPA_PROMH</name>
<sequence length="175" mass="17910">MKLNKLALVLGLGLSVVAGSALAADQGHGTVKFVGSIIDAPCSITPDTENQTVPLGQISTAALKDGGRSNSRDFKISLENCTTETYKTVQTTFTGSEATEVLEGSLGIEGIAKNAAVVITDAGGKQIKLGTPSAAQNLRDGNNDLNFAAYLQGSASEAAVPGDFTAIATFALTYQ</sequence>
<comment type="function">
    <text>Major structural component of mannose-resistant/proteus-like fimbriae of P.mirabilis.</text>
</comment>
<comment type="subcellular location">
    <subcellularLocation>
        <location>Fimbrium</location>
    </subcellularLocation>
</comment>
<comment type="similarity">
    <text evidence="2">Belongs to the fimbrial protein family.</text>
</comment>